<organism>
    <name type="scientific">Homo sapiens</name>
    <name type="common">Human</name>
    <dbReference type="NCBI Taxonomy" id="9606"/>
    <lineage>
        <taxon>Eukaryota</taxon>
        <taxon>Metazoa</taxon>
        <taxon>Chordata</taxon>
        <taxon>Craniata</taxon>
        <taxon>Vertebrata</taxon>
        <taxon>Euteleostomi</taxon>
        <taxon>Mammalia</taxon>
        <taxon>Eutheria</taxon>
        <taxon>Euarchontoglires</taxon>
        <taxon>Primates</taxon>
        <taxon>Haplorrhini</taxon>
        <taxon>Catarrhini</taxon>
        <taxon>Hominidae</taxon>
        <taxon>Homo</taxon>
    </lineage>
</organism>
<name>PAR1_HUMAN</name>
<protein>
    <recommendedName>
        <fullName evidence="17">Proteinase-activated receptor 1</fullName>
        <shortName>PAR-1</shortName>
    </recommendedName>
    <alternativeName>
        <fullName>Coagulation factor II receptor</fullName>
    </alternativeName>
    <alternativeName>
        <fullName>Thrombin receptor</fullName>
    </alternativeName>
</protein>
<dbReference type="EMBL" id="M62424">
    <property type="protein sequence ID" value="AAA36743.1"/>
    <property type="molecule type" value="mRNA"/>
</dbReference>
<dbReference type="EMBL" id="AF391809">
    <property type="protein sequence ID" value="AAK69768.1"/>
    <property type="molecule type" value="Genomic_DNA"/>
</dbReference>
<dbReference type="EMBL" id="BT007279">
    <property type="protein sequence ID" value="AAP35943.1"/>
    <property type="molecule type" value="mRNA"/>
</dbReference>
<dbReference type="EMBL" id="BC002464">
    <property type="protein sequence ID" value="AAH02464.1"/>
    <property type="molecule type" value="mRNA"/>
</dbReference>
<dbReference type="EMBL" id="BC051909">
    <property type="protein sequence ID" value="AAH51909.1"/>
    <property type="molecule type" value="mRNA"/>
</dbReference>
<dbReference type="CCDS" id="CCDS4032.1"/>
<dbReference type="PIR" id="A37912">
    <property type="entry name" value="A37912"/>
</dbReference>
<dbReference type="RefSeq" id="NP_001298242.1">
    <property type="nucleotide sequence ID" value="NM_001311313.1"/>
</dbReference>
<dbReference type="RefSeq" id="NP_001983.2">
    <property type="nucleotide sequence ID" value="NM_001992.5"/>
</dbReference>
<dbReference type="PDB" id="1NRN">
    <property type="method" value="X-ray"/>
    <property type="resolution" value="3.10 A"/>
    <property type="chains" value="R=38-60"/>
</dbReference>
<dbReference type="PDB" id="1NRO">
    <property type="method" value="X-ray"/>
    <property type="resolution" value="3.10 A"/>
    <property type="chains" value="R=38-64"/>
</dbReference>
<dbReference type="PDB" id="1NRP">
    <property type="method" value="X-ray"/>
    <property type="resolution" value="3.00 A"/>
    <property type="chains" value="R=38-60"/>
</dbReference>
<dbReference type="PDB" id="1NRQ">
    <property type="method" value="X-ray"/>
    <property type="resolution" value="3.50 A"/>
    <property type="chains" value="R=40-60"/>
</dbReference>
<dbReference type="PDB" id="1NRR">
    <property type="method" value="X-ray"/>
    <property type="resolution" value="2.40 A"/>
    <property type="chains" value="R=43-60"/>
</dbReference>
<dbReference type="PDB" id="3BEF">
    <property type="method" value="X-ray"/>
    <property type="resolution" value="2.20 A"/>
    <property type="chains" value="C/F=49-57"/>
</dbReference>
<dbReference type="PDB" id="3HKI">
    <property type="method" value="X-ray"/>
    <property type="resolution" value="2.20 A"/>
    <property type="chains" value="C/F=42-62"/>
</dbReference>
<dbReference type="PDB" id="3HKJ">
    <property type="method" value="X-ray"/>
    <property type="resolution" value="2.60 A"/>
    <property type="chains" value="C/F=42-62"/>
</dbReference>
<dbReference type="PDB" id="3LU9">
    <property type="method" value="X-ray"/>
    <property type="resolution" value="1.80 A"/>
    <property type="chains" value="C/F=33-57"/>
</dbReference>
<dbReference type="PDB" id="3VW7">
    <property type="method" value="X-ray"/>
    <property type="resolution" value="2.20 A"/>
    <property type="chains" value="A=86-395"/>
</dbReference>
<dbReference type="PDB" id="8XOR">
    <property type="method" value="EM"/>
    <property type="resolution" value="3.00 A"/>
    <property type="chains" value="R=42-397"/>
</dbReference>
<dbReference type="PDB" id="8XOS">
    <property type="method" value="EM"/>
    <property type="resolution" value="3.20 A"/>
    <property type="chains" value="R=42-397"/>
</dbReference>
<dbReference type="PDBsum" id="1NRN"/>
<dbReference type="PDBsum" id="1NRO"/>
<dbReference type="PDBsum" id="1NRP"/>
<dbReference type="PDBsum" id="1NRQ"/>
<dbReference type="PDBsum" id="1NRR"/>
<dbReference type="PDBsum" id="3BEF"/>
<dbReference type="PDBsum" id="3HKI"/>
<dbReference type="PDBsum" id="3HKJ"/>
<dbReference type="PDBsum" id="3LU9"/>
<dbReference type="PDBsum" id="3VW7"/>
<dbReference type="PDBsum" id="8XOR"/>
<dbReference type="PDBsum" id="8XOS"/>
<dbReference type="EMDB" id="EMD-38538"/>
<dbReference type="EMDB" id="EMD-38539"/>
<dbReference type="SMR" id="P25116"/>
<dbReference type="BioGRID" id="108448">
    <property type="interactions" value="28"/>
</dbReference>
<dbReference type="CORUM" id="P25116"/>
<dbReference type="DIP" id="DIP-29703N"/>
<dbReference type="FunCoup" id="P25116">
    <property type="interactions" value="1377"/>
</dbReference>
<dbReference type="IntAct" id="P25116">
    <property type="interactions" value="22"/>
</dbReference>
<dbReference type="MINT" id="P25116"/>
<dbReference type="STRING" id="9606.ENSP00000321326"/>
<dbReference type="BindingDB" id="P25116"/>
<dbReference type="ChEMBL" id="CHEMBL3974"/>
<dbReference type="DrugBank" id="DB12046">
    <property type="generic name" value="Atopaxar"/>
</dbReference>
<dbReference type="DrugBank" id="DB11839">
    <property type="generic name" value="PZ-128"/>
</dbReference>
<dbReference type="DrugBank" id="DB05361">
    <property type="generic name" value="SR-123781A"/>
</dbReference>
<dbReference type="DrugBank" id="DB00086">
    <property type="generic name" value="Streptokinase"/>
</dbReference>
<dbReference type="DrugBank" id="DB11300">
    <property type="generic name" value="Thrombin"/>
</dbReference>
<dbReference type="DrugBank" id="DB09030">
    <property type="generic name" value="Vorapaxar"/>
</dbReference>
<dbReference type="DrugCentral" id="P25116"/>
<dbReference type="GuidetoPHARMACOLOGY" id="347"/>
<dbReference type="TCDB" id="9.A.14.13.37">
    <property type="family name" value="the g-protein-coupled receptor (gpcr) family"/>
</dbReference>
<dbReference type="GlyCosmos" id="P25116">
    <property type="glycosylation" value="5 sites, No reported glycans"/>
</dbReference>
<dbReference type="GlyGen" id="P25116">
    <property type="glycosylation" value="9 sites, 3 N-linked glycans (4 sites), 1 O-linked glycan (1 site)"/>
</dbReference>
<dbReference type="iPTMnet" id="P25116"/>
<dbReference type="PhosphoSitePlus" id="P25116"/>
<dbReference type="SwissPalm" id="P25116"/>
<dbReference type="BioMuta" id="F2R"/>
<dbReference type="DMDM" id="20178318"/>
<dbReference type="jPOST" id="P25116"/>
<dbReference type="MassIVE" id="P25116"/>
<dbReference type="PaxDb" id="9606-ENSP00000321326"/>
<dbReference type="PeptideAtlas" id="P25116"/>
<dbReference type="ProteomicsDB" id="54263"/>
<dbReference type="Antibodypedia" id="4409">
    <property type="antibodies" value="667 antibodies from 43 providers"/>
</dbReference>
<dbReference type="DNASU" id="2149"/>
<dbReference type="Ensembl" id="ENST00000319211.5">
    <property type="protein sequence ID" value="ENSP00000321326.4"/>
    <property type="gene ID" value="ENSG00000181104.7"/>
</dbReference>
<dbReference type="GeneID" id="2149"/>
<dbReference type="KEGG" id="hsa:2149"/>
<dbReference type="MANE-Select" id="ENST00000319211.5">
    <property type="protein sequence ID" value="ENSP00000321326.4"/>
    <property type="RefSeq nucleotide sequence ID" value="NM_001992.5"/>
    <property type="RefSeq protein sequence ID" value="NP_001983.2"/>
</dbReference>
<dbReference type="UCSC" id="uc003ken.5">
    <property type="organism name" value="human"/>
</dbReference>
<dbReference type="AGR" id="HGNC:3537"/>
<dbReference type="CTD" id="2149"/>
<dbReference type="DisGeNET" id="2149"/>
<dbReference type="GeneCards" id="F2R"/>
<dbReference type="HGNC" id="HGNC:3537">
    <property type="gene designation" value="F2R"/>
</dbReference>
<dbReference type="HPA" id="ENSG00000181104">
    <property type="expression patterns" value="Tissue enhanced (lymphoid)"/>
</dbReference>
<dbReference type="MIM" id="187930">
    <property type="type" value="gene"/>
</dbReference>
<dbReference type="neXtProt" id="NX_P25116"/>
<dbReference type="OpenTargets" id="ENSG00000181104"/>
<dbReference type="PharmGKB" id="PA27946"/>
<dbReference type="VEuPathDB" id="HostDB:ENSG00000181104"/>
<dbReference type="eggNOG" id="ENOG502QTR0">
    <property type="taxonomic scope" value="Eukaryota"/>
</dbReference>
<dbReference type="GeneTree" id="ENSGT01050000244840"/>
<dbReference type="HOGENOM" id="CLU_009579_8_2_1"/>
<dbReference type="InParanoid" id="P25116"/>
<dbReference type="OMA" id="QCQKQVA"/>
<dbReference type="OrthoDB" id="8881832at2759"/>
<dbReference type="PAN-GO" id="P25116">
    <property type="GO annotations" value="5 GO annotations based on evolutionary models"/>
</dbReference>
<dbReference type="PhylomeDB" id="P25116"/>
<dbReference type="TreeFam" id="TF330775"/>
<dbReference type="PathwayCommons" id="P25116"/>
<dbReference type="Reactome" id="R-HSA-140875">
    <property type="pathway name" value="Common Pathway of Fibrin Clot Formation"/>
</dbReference>
<dbReference type="Reactome" id="R-HSA-375276">
    <property type="pathway name" value="Peptide ligand-binding receptors"/>
</dbReference>
<dbReference type="Reactome" id="R-HSA-416476">
    <property type="pathway name" value="G alpha (q) signalling events"/>
</dbReference>
<dbReference type="Reactome" id="R-HSA-456926">
    <property type="pathway name" value="Thrombin signalling through proteinase activated receptors (PARs)"/>
</dbReference>
<dbReference type="SignaLink" id="P25116"/>
<dbReference type="SIGNOR" id="P25116"/>
<dbReference type="BioGRID-ORCS" id="2149">
    <property type="hits" value="20 hits in 1169 CRISPR screens"/>
</dbReference>
<dbReference type="ChiTaRS" id="F2R">
    <property type="organism name" value="human"/>
</dbReference>
<dbReference type="EvolutionaryTrace" id="P25116"/>
<dbReference type="GeneWiki" id="Coagulation_factor_II_receptor"/>
<dbReference type="GenomeRNAi" id="2149"/>
<dbReference type="Pharos" id="P25116">
    <property type="development level" value="Tclin"/>
</dbReference>
<dbReference type="PRO" id="PR:P25116"/>
<dbReference type="Proteomes" id="UP000005640">
    <property type="component" value="Chromosome 5"/>
</dbReference>
<dbReference type="RNAct" id="P25116">
    <property type="molecule type" value="protein"/>
</dbReference>
<dbReference type="Bgee" id="ENSG00000181104">
    <property type="expression patterns" value="Expressed in stromal cell of endometrium and 148 other cell types or tissues"/>
</dbReference>
<dbReference type="ExpressionAtlas" id="P25116">
    <property type="expression patterns" value="baseline and differential"/>
</dbReference>
<dbReference type="GO" id="GO:0005901">
    <property type="term" value="C:caveola"/>
    <property type="evidence" value="ECO:0000314"/>
    <property type="project" value="BHF-UCL"/>
</dbReference>
<dbReference type="GO" id="GO:0009986">
    <property type="term" value="C:cell surface"/>
    <property type="evidence" value="ECO:0000314"/>
    <property type="project" value="UniProtKB"/>
</dbReference>
<dbReference type="GO" id="GO:0005769">
    <property type="term" value="C:early endosome"/>
    <property type="evidence" value="ECO:0000314"/>
    <property type="project" value="UniProtKB"/>
</dbReference>
<dbReference type="GO" id="GO:0005576">
    <property type="term" value="C:extracellular region"/>
    <property type="evidence" value="ECO:0000304"/>
    <property type="project" value="Reactome"/>
</dbReference>
<dbReference type="GO" id="GO:0005794">
    <property type="term" value="C:Golgi apparatus"/>
    <property type="evidence" value="ECO:0000304"/>
    <property type="project" value="ProtInc"/>
</dbReference>
<dbReference type="GO" id="GO:0005770">
    <property type="term" value="C:late endosome"/>
    <property type="evidence" value="ECO:0000314"/>
    <property type="project" value="UniProtKB"/>
</dbReference>
<dbReference type="GO" id="GO:0031594">
    <property type="term" value="C:neuromuscular junction"/>
    <property type="evidence" value="ECO:0000250"/>
    <property type="project" value="UniProtKB"/>
</dbReference>
<dbReference type="GO" id="GO:0005886">
    <property type="term" value="C:plasma membrane"/>
    <property type="evidence" value="ECO:0000314"/>
    <property type="project" value="UniProtKB"/>
</dbReference>
<dbReference type="GO" id="GO:0031094">
    <property type="term" value="C:platelet dense tubular network"/>
    <property type="evidence" value="ECO:0000314"/>
    <property type="project" value="BHF-UCL"/>
</dbReference>
<dbReference type="GO" id="GO:0045211">
    <property type="term" value="C:postsynaptic membrane"/>
    <property type="evidence" value="ECO:0000250"/>
    <property type="project" value="UniProtKB"/>
</dbReference>
<dbReference type="GO" id="GO:0004930">
    <property type="term" value="F:G protein-coupled receptor activity"/>
    <property type="evidence" value="ECO:0000250"/>
    <property type="project" value="UniProtKB"/>
</dbReference>
<dbReference type="GO" id="GO:0001965">
    <property type="term" value="F:G-protein alpha-subunit binding"/>
    <property type="evidence" value="ECO:0000250"/>
    <property type="project" value="UniProtKB"/>
</dbReference>
<dbReference type="GO" id="GO:0031681">
    <property type="term" value="F:G-protein beta-subunit binding"/>
    <property type="evidence" value="ECO:0000250"/>
    <property type="project" value="UniProtKB"/>
</dbReference>
<dbReference type="GO" id="GO:0005102">
    <property type="term" value="F:signaling receptor binding"/>
    <property type="evidence" value="ECO:0000353"/>
    <property type="project" value="BHF-UCL"/>
</dbReference>
<dbReference type="GO" id="GO:0015057">
    <property type="term" value="F:thrombin-activated receptor activity"/>
    <property type="evidence" value="ECO:0000314"/>
    <property type="project" value="BHF-UCL"/>
</dbReference>
<dbReference type="GO" id="GO:0009653">
    <property type="term" value="P:anatomical structure morphogenesis"/>
    <property type="evidence" value="ECO:0000304"/>
    <property type="project" value="ProtInc"/>
</dbReference>
<dbReference type="GO" id="GO:0045217">
    <property type="term" value="P:cell-cell junction maintenance"/>
    <property type="evidence" value="ECO:0000315"/>
    <property type="project" value="UniProtKB"/>
</dbReference>
<dbReference type="GO" id="GO:0002248">
    <property type="term" value="P:connective tissue replacement involved in inflammatory response wound healing"/>
    <property type="evidence" value="ECO:0000314"/>
    <property type="project" value="BHF-UCL"/>
</dbReference>
<dbReference type="GO" id="GO:0036145">
    <property type="term" value="P:dendritic cell homeostasis"/>
    <property type="evidence" value="ECO:0007669"/>
    <property type="project" value="Ensembl"/>
</dbReference>
<dbReference type="GO" id="GO:0007529">
    <property type="term" value="P:establishment of synaptic specificity at neuromuscular junction"/>
    <property type="evidence" value="ECO:0000250"/>
    <property type="project" value="UniProtKB"/>
</dbReference>
<dbReference type="GO" id="GO:0007186">
    <property type="term" value="P:G protein-coupled receptor signaling pathway"/>
    <property type="evidence" value="ECO:0000250"/>
    <property type="project" value="UniProtKB"/>
</dbReference>
<dbReference type="GO" id="GO:0048873">
    <property type="term" value="P:homeostasis of number of cells within a tissue"/>
    <property type="evidence" value="ECO:0000250"/>
    <property type="project" value="UniProtKB"/>
</dbReference>
<dbReference type="GO" id="GO:0006954">
    <property type="term" value="P:inflammatory response"/>
    <property type="evidence" value="ECO:0000250"/>
    <property type="project" value="UniProtKB"/>
</dbReference>
<dbReference type="GO" id="GO:0008285">
    <property type="term" value="P:negative regulation of cell population proliferation"/>
    <property type="evidence" value="ECO:0000314"/>
    <property type="project" value="BHF-UCL"/>
</dbReference>
<dbReference type="GO" id="GO:0003105">
    <property type="term" value="P:negative regulation of glomerular filtration"/>
    <property type="evidence" value="ECO:0000250"/>
    <property type="project" value="UniProtKB"/>
</dbReference>
<dbReference type="GO" id="GO:0043524">
    <property type="term" value="P:negative regulation of neuron apoptotic process"/>
    <property type="evidence" value="ECO:0000250"/>
    <property type="project" value="UniProtKB"/>
</dbReference>
<dbReference type="GO" id="GO:1900134">
    <property type="term" value="P:negative regulation of renin secretion into blood stream"/>
    <property type="evidence" value="ECO:0000250"/>
    <property type="project" value="UniProtKB"/>
</dbReference>
<dbReference type="GO" id="GO:0007200">
    <property type="term" value="P:phospholipase C-activating G protein-coupled receptor signaling pathway"/>
    <property type="evidence" value="ECO:0000314"/>
    <property type="project" value="BHF-UCL"/>
</dbReference>
<dbReference type="GO" id="GO:0030168">
    <property type="term" value="P:platelet activation"/>
    <property type="evidence" value="ECO:0000314"/>
    <property type="project" value="BHF-UCL"/>
</dbReference>
<dbReference type="GO" id="GO:0060155">
    <property type="term" value="P:platelet dense granule organization"/>
    <property type="evidence" value="ECO:0000305"/>
    <property type="project" value="BHF-UCL"/>
</dbReference>
<dbReference type="GO" id="GO:0043065">
    <property type="term" value="P:positive regulation of apoptotic process"/>
    <property type="evidence" value="ECO:0000314"/>
    <property type="project" value="BHF-UCL"/>
</dbReference>
<dbReference type="GO" id="GO:0030194">
    <property type="term" value="P:positive regulation of blood coagulation"/>
    <property type="evidence" value="ECO:0000314"/>
    <property type="project" value="BHF-UCL"/>
</dbReference>
<dbReference type="GO" id="GO:0051928">
    <property type="term" value="P:positive regulation of calcium ion transport"/>
    <property type="evidence" value="ECO:0000250"/>
    <property type="project" value="UniProtKB"/>
</dbReference>
<dbReference type="GO" id="GO:0043123">
    <property type="term" value="P:positive regulation of canonical NF-kappaB signal transduction"/>
    <property type="evidence" value="ECO:0000270"/>
    <property type="project" value="UniProtKB"/>
</dbReference>
<dbReference type="GO" id="GO:0030335">
    <property type="term" value="P:positive regulation of cell migration"/>
    <property type="evidence" value="ECO:0000315"/>
    <property type="project" value="BHF-UCL"/>
</dbReference>
<dbReference type="GO" id="GO:0008284">
    <property type="term" value="P:positive regulation of cell population proliferation"/>
    <property type="evidence" value="ECO:0000250"/>
    <property type="project" value="UniProtKB"/>
</dbReference>
<dbReference type="GO" id="GO:0032967">
    <property type="term" value="P:positive regulation of collagen biosynthetic process"/>
    <property type="evidence" value="ECO:0000314"/>
    <property type="project" value="BHF-UCL"/>
</dbReference>
<dbReference type="GO" id="GO:0007204">
    <property type="term" value="P:positive regulation of cytosolic calcium ion concentration"/>
    <property type="evidence" value="ECO:0000250"/>
    <property type="project" value="UniProtKB"/>
</dbReference>
<dbReference type="GO" id="GO:0045893">
    <property type="term" value="P:positive regulation of DNA-templated transcription"/>
    <property type="evidence" value="ECO:0000314"/>
    <property type="project" value="BHF-UCL"/>
</dbReference>
<dbReference type="GO" id="GO:0070374">
    <property type="term" value="P:positive regulation of ERK1 and ERK2 cascade"/>
    <property type="evidence" value="ECO:0000250"/>
    <property type="project" value="UniProtKB"/>
</dbReference>
<dbReference type="GO" id="GO:0032755">
    <property type="term" value="P:positive regulation of interleukin-6 production"/>
    <property type="evidence" value="ECO:0000314"/>
    <property type="project" value="UniProtKB"/>
</dbReference>
<dbReference type="GO" id="GO:0032757">
    <property type="term" value="P:positive regulation of interleukin-8 production"/>
    <property type="evidence" value="ECO:0000314"/>
    <property type="project" value="UniProtKB"/>
</dbReference>
<dbReference type="GO" id="GO:0043410">
    <property type="term" value="P:positive regulation of MAPK cascade"/>
    <property type="evidence" value="ECO:0000314"/>
    <property type="project" value="BHF-UCL"/>
</dbReference>
<dbReference type="GO" id="GO:0051897">
    <property type="term" value="P:positive regulation of phosphatidylinositol 3-kinase/protein kinase B signal transduction"/>
    <property type="evidence" value="ECO:0000250"/>
    <property type="project" value="UniProtKB"/>
</dbReference>
<dbReference type="GO" id="GO:0046427">
    <property type="term" value="P:positive regulation of receptor signaling pathway via JAK-STAT"/>
    <property type="evidence" value="ECO:0000303"/>
    <property type="project" value="BHF-UCL"/>
</dbReference>
<dbReference type="GO" id="GO:0051281">
    <property type="term" value="P:positive regulation of release of sequestered calcium ion into cytosol"/>
    <property type="evidence" value="ECO:0000314"/>
    <property type="project" value="BHF-UCL"/>
</dbReference>
<dbReference type="GO" id="GO:0035025">
    <property type="term" value="P:positive regulation of Rho protein signal transduction"/>
    <property type="evidence" value="ECO:0000250"/>
    <property type="project" value="UniProtKB"/>
</dbReference>
<dbReference type="GO" id="GO:0045987">
    <property type="term" value="P:positive regulation of smooth muscle contraction"/>
    <property type="evidence" value="ECO:0000250"/>
    <property type="project" value="UniProtKB"/>
</dbReference>
<dbReference type="GO" id="GO:0045907">
    <property type="term" value="P:positive regulation of vasoconstriction"/>
    <property type="evidence" value="ECO:0000250"/>
    <property type="project" value="UniProtKB"/>
</dbReference>
<dbReference type="GO" id="GO:0030193">
    <property type="term" value="P:regulation of blood coagulation"/>
    <property type="evidence" value="ECO:0000314"/>
    <property type="project" value="BHF-UCL"/>
</dbReference>
<dbReference type="GO" id="GO:0032651">
    <property type="term" value="P:regulation of interleukin-1 beta production"/>
    <property type="evidence" value="ECO:0000250"/>
    <property type="project" value="UniProtKB"/>
</dbReference>
<dbReference type="GO" id="GO:0048167">
    <property type="term" value="P:regulation of synaptic plasticity"/>
    <property type="evidence" value="ECO:0000250"/>
    <property type="project" value="UniProtKB"/>
</dbReference>
<dbReference type="GO" id="GO:0051209">
    <property type="term" value="P:release of sequestered calcium ion into cytosol"/>
    <property type="evidence" value="ECO:0000250"/>
    <property type="project" value="UniProtKB"/>
</dbReference>
<dbReference type="GO" id="GO:0032496">
    <property type="term" value="P:response to lipopolysaccharide"/>
    <property type="evidence" value="ECO:0000250"/>
    <property type="project" value="UniProtKB"/>
</dbReference>
<dbReference type="GO" id="GO:0009611">
    <property type="term" value="P:response to wounding"/>
    <property type="evidence" value="ECO:0000314"/>
    <property type="project" value="BHF-UCL"/>
</dbReference>
<dbReference type="GO" id="GO:0070493">
    <property type="term" value="P:thrombin-activated receptor signaling pathway"/>
    <property type="evidence" value="ECO:0000314"/>
    <property type="project" value="UniProt"/>
</dbReference>
<dbReference type="GO" id="GO:0099553">
    <property type="term" value="P:trans-synaptic signaling by endocannabinoid, modulating synaptic transmission"/>
    <property type="evidence" value="ECO:0007669"/>
    <property type="project" value="Ensembl"/>
</dbReference>
<dbReference type="CDD" id="cd15369">
    <property type="entry name" value="7tmA_PAR1"/>
    <property type="match status" value="1"/>
</dbReference>
<dbReference type="FunFam" id="1.20.1070.10:FF:000040">
    <property type="entry name" value="Coagulation factor 2 (thrombin) receptor"/>
    <property type="match status" value="1"/>
</dbReference>
<dbReference type="Gene3D" id="1.20.1070.10">
    <property type="entry name" value="Rhodopsin 7-helix transmembrane proteins"/>
    <property type="match status" value="1"/>
</dbReference>
<dbReference type="InterPro" id="IPR000276">
    <property type="entry name" value="GPCR_Rhodpsn"/>
</dbReference>
<dbReference type="InterPro" id="IPR017452">
    <property type="entry name" value="GPCR_Rhodpsn_7TM"/>
</dbReference>
<dbReference type="InterPro" id="IPR003912">
    <property type="entry name" value="Protea_act_rcpt"/>
</dbReference>
<dbReference type="InterPro" id="IPR000935">
    <property type="entry name" value="Thrmbn_rcpt"/>
</dbReference>
<dbReference type="PANTHER" id="PTHR24232">
    <property type="entry name" value="G-PROTEIN COUPLED RECEPTOR"/>
    <property type="match status" value="1"/>
</dbReference>
<dbReference type="PANTHER" id="PTHR24232:SF20">
    <property type="entry name" value="PROTEINASE-ACTIVATED RECEPTOR 1"/>
    <property type="match status" value="1"/>
</dbReference>
<dbReference type="Pfam" id="PF00001">
    <property type="entry name" value="7tm_1"/>
    <property type="match status" value="1"/>
</dbReference>
<dbReference type="PRINTS" id="PR00237">
    <property type="entry name" value="GPCRRHODOPSN"/>
</dbReference>
<dbReference type="PRINTS" id="PR01428">
    <property type="entry name" value="PROTEASEAR"/>
</dbReference>
<dbReference type="PRINTS" id="PR00908">
    <property type="entry name" value="THROMBINR"/>
</dbReference>
<dbReference type="SUPFAM" id="SSF81321">
    <property type="entry name" value="Family A G protein-coupled receptor-like"/>
    <property type="match status" value="1"/>
</dbReference>
<dbReference type="PROSITE" id="PS00237">
    <property type="entry name" value="G_PROTEIN_RECEP_F1_1"/>
    <property type="match status" value="1"/>
</dbReference>
<dbReference type="PROSITE" id="PS50262">
    <property type="entry name" value="G_PROTEIN_RECEP_F1_2"/>
    <property type="match status" value="1"/>
</dbReference>
<keyword id="KW-0002">3D-structure</keyword>
<keyword id="KW-0094">Blood coagulation</keyword>
<keyword id="KW-1003">Cell membrane</keyword>
<keyword id="KW-1015">Disulfide bond</keyword>
<keyword id="KW-0297">G-protein coupled receptor</keyword>
<keyword id="KW-0325">Glycoprotein</keyword>
<keyword id="KW-0356">Hemostasis</keyword>
<keyword id="KW-0472">Membrane</keyword>
<keyword id="KW-0597">Phosphoprotein</keyword>
<keyword id="KW-1267">Proteomics identification</keyword>
<keyword id="KW-0675">Receptor</keyword>
<keyword id="KW-1185">Reference proteome</keyword>
<keyword id="KW-0732">Signal</keyword>
<keyword id="KW-0807">Transducer</keyword>
<keyword id="KW-0812">Transmembrane</keyword>
<keyword id="KW-1133">Transmembrane helix</keyword>
<sequence length="425" mass="47441">MGPRRLLLVAACFSLCGPLLSARTRARRPESKATNATLDPRSFLLRNPNDKYEPFWEDEEKNESGLTEYRLVSINKSSPLQKQLPAFISEDASGYLTSSWLTLFVPSVYTGVFVVSLPLNIMAIVVFILKMKVKKPAVVYMLHLATADVLFVSVLPFKISYYFSGSDWQFGSELCRFVTAAFYCNMYASILLMTVISIDRFLAVVYPMQSLSWRTLGRASFTCLAIWALAIAGVVPLLLKEQTIQVPGLNITTCHDVLNETLLEGYYAYYFSAFSAVFFFVPLIISTVCYVSIIRCLSSSAVANRSKKSRALFLSAAVFCIFIICFGPTNVLLIAHYSFLSHTSTTEAAYFAYLLCVCVSSISCCIDPLIYYYASSECQRYVYSILCCKESSDPSSYNSSGQLMASKMDTCSSNLNNSIYKKLLT</sequence>
<accession>P25116</accession>
<accession>Q53XV0</accession>
<accession>Q96RF7</accession>
<accession>Q9BUN4</accession>
<evidence type="ECO:0000250" key="1">
    <source>
        <dbReference type="UniProtKB" id="P26824"/>
    </source>
</evidence>
<evidence type="ECO:0000250" key="2">
    <source>
        <dbReference type="UniProtKB" id="P30558"/>
    </source>
</evidence>
<evidence type="ECO:0000255" key="3"/>
<evidence type="ECO:0000255" key="4">
    <source>
        <dbReference type="PROSITE-ProRule" id="PRU00521"/>
    </source>
</evidence>
<evidence type="ECO:0000269" key="5">
    <source>
    </source>
</evidence>
<evidence type="ECO:0000269" key="6">
    <source>
    </source>
</evidence>
<evidence type="ECO:0000269" key="7">
    <source>
    </source>
</evidence>
<evidence type="ECO:0000269" key="8">
    <source>
    </source>
</evidence>
<evidence type="ECO:0000269" key="9">
    <source>
    </source>
</evidence>
<evidence type="ECO:0000269" key="10">
    <source>
    </source>
</evidence>
<evidence type="ECO:0000269" key="11">
    <source>
    </source>
</evidence>
<evidence type="ECO:0000269" key="12">
    <source>
    </source>
</evidence>
<evidence type="ECO:0000269" key="13">
    <source>
    </source>
</evidence>
<evidence type="ECO:0000269" key="14">
    <source>
    </source>
</evidence>
<evidence type="ECO:0000269" key="15">
    <source>
    </source>
</evidence>
<evidence type="ECO:0000269" key="16">
    <source ref="3"/>
</evidence>
<evidence type="ECO:0000305" key="17"/>
<evidence type="ECO:0000312" key="18">
    <source>
        <dbReference type="HGNC" id="HGNC:3537"/>
    </source>
</evidence>
<evidence type="ECO:0007744" key="19">
    <source>
    </source>
</evidence>
<evidence type="ECO:0007829" key="20">
    <source>
        <dbReference type="PDB" id="3LU9"/>
    </source>
</evidence>
<evidence type="ECO:0007829" key="21">
    <source>
        <dbReference type="PDB" id="3VW7"/>
    </source>
</evidence>
<evidence type="ECO:0007829" key="22">
    <source>
        <dbReference type="PDB" id="8XOR"/>
    </source>
</evidence>
<reference key="1">
    <citation type="journal article" date="1991" name="Cell">
        <title>Molecular cloning of a functional thrombin receptor reveals a novel proteolytic mechanism of receptor activation.</title>
        <authorList>
            <person name="Vu T.-K.H."/>
            <person name="Hung D.T."/>
            <person name="Wheaton V.I."/>
            <person name="Coughlin S.R."/>
        </authorList>
    </citation>
    <scope>NUCLEOTIDE SEQUENCE [MRNA]</scope>
    <scope>FUNCTION</scope>
    <scope>PROTEOLYTIC CLEAVAGE</scope>
</reference>
<reference key="2">
    <citation type="submission" date="2001-07" db="EMBL/GenBank/DDBJ databases">
        <authorList>
            <consortium name="SeattleSNPs variation discovery resource"/>
        </authorList>
    </citation>
    <scope>NUCLEOTIDE SEQUENCE [GENOMIC DNA]</scope>
</reference>
<reference key="3">
    <citation type="submission" date="2003-05" db="EMBL/GenBank/DDBJ databases">
        <title>Cloning of human full-length CDSs in BD Creator(TM) system donor vector.</title>
        <authorList>
            <person name="Kalnine N."/>
            <person name="Chen X."/>
            <person name="Rolfs A."/>
            <person name="Halleck A."/>
            <person name="Hines L."/>
            <person name="Eisenstein S."/>
            <person name="Koundinya M."/>
            <person name="Raphael J."/>
            <person name="Moreira D."/>
            <person name="Kelley T."/>
            <person name="LaBaer J."/>
            <person name="Lin Y."/>
            <person name="Phelan M."/>
            <person name="Farmer A."/>
        </authorList>
    </citation>
    <scope>NUCLEOTIDE SEQUENCE [LARGE SCALE MRNA]</scope>
    <scope>VARIANT VAL-335</scope>
</reference>
<reference key="4">
    <citation type="journal article" date="2004" name="Genome Res.">
        <title>The status, quality, and expansion of the NIH full-length cDNA project: the Mammalian Gene Collection (MGC).</title>
        <authorList>
            <consortium name="The MGC Project Team"/>
        </authorList>
    </citation>
    <scope>NUCLEOTIDE SEQUENCE [LARGE SCALE MRNA]</scope>
    <scope>VARIANT VAL-335</scope>
    <source>
        <tissue>Eye</tissue>
    </source>
</reference>
<reference key="5">
    <citation type="journal article" date="1995" name="J. Biol. Chem.">
        <title>Proteolysis of the human platelet and endothelial cell thrombin receptor by neutrophil-derived cathepsin G.</title>
        <authorList>
            <person name="Molino M."/>
            <person name="Blanchard N."/>
            <person name="Belmonte E."/>
            <person name="Tarver A.P."/>
            <person name="Abrams C."/>
            <person name="Hoxie J.A."/>
            <person name="Cerletti C."/>
            <person name="Brass L.F."/>
        </authorList>
    </citation>
    <scope>PROTEOLYTIC CLEAVAGE</scope>
    <scope>MUTAGENESIS OF 55-PHE-TRP-56</scope>
</reference>
<reference key="6">
    <citation type="journal article" date="1996" name="J. Biol. Chem.">
        <title>Role of the thrombin receptor's cytoplasmic tail in intracellular trafficking. Distinct determinants for agonist-triggered versus tonic internalization and intracellular localization.</title>
        <authorList>
            <person name="Shapiro M.J."/>
            <person name="Trejo J."/>
            <person name="Zeng D."/>
            <person name="Coughlin S.R."/>
        </authorList>
    </citation>
    <scope>PHOSPHORYLATION</scope>
</reference>
<reference key="7">
    <citation type="journal article" date="1999" name="J. Clin. Invest.">
        <title>Protease-activated receptors 1 and 4 mediate activation of human platelets by thrombin.</title>
        <authorList>
            <person name="Kahn M.L."/>
            <person name="Nakanishi-Matsui M."/>
            <person name="Shapiro M.J."/>
            <person name="Ishihara H."/>
            <person name="Coughlin S.R."/>
        </authorList>
    </citation>
    <scope>FUNCTION</scope>
</reference>
<reference key="8">
    <citation type="journal article" date="2009" name="J. Pharmacol. Exp. Ther.">
        <title>Parstatin, the cleaved peptide on proteinase-activated receptor 1 activation, is a potent inhibitor of angiogenesis.</title>
        <authorList>
            <person name="Zania P."/>
            <person name="Gourni D."/>
            <person name="Aplin A.C."/>
            <person name="Nicosia R.F."/>
            <person name="Flordellis C.S."/>
            <person name="Maragoudakis M.E."/>
            <person name="Tsopanoglou N.E."/>
        </authorList>
    </citation>
    <scope>ANGIOGENESIS INHIBITION PROPERTIES OF PARSTATIN</scope>
</reference>
<reference key="9">
    <citation type="journal article" date="2012" name="FEBS Lett.">
        <title>The protease-activated receptor 1 possesses a functional and cleavable signal peptide which is necessary for receptor expression.</title>
        <authorList>
            <person name="Zampatis D.E."/>
            <person name="Rutz C."/>
            <person name="Furkert J."/>
            <person name="Schmidt A."/>
            <person name="Wustenhagen D."/>
            <person name="Kubick S."/>
            <person name="Tsopanoglou N.E."/>
            <person name="Schulein R."/>
        </authorList>
    </citation>
    <scope>SIGNAL SEQUENCE CLEAVAGE SITE</scope>
</reference>
<reference key="10">
    <citation type="journal article" date="2013" name="J. Proteome Res.">
        <title>Toward a comprehensive characterization of a human cancer cell phosphoproteome.</title>
        <authorList>
            <person name="Zhou H."/>
            <person name="Di Palma S."/>
            <person name="Preisinger C."/>
            <person name="Peng M."/>
            <person name="Polat A.N."/>
            <person name="Heck A.J."/>
            <person name="Mohammed S."/>
        </authorList>
    </citation>
    <scope>PHOSPHORYLATION [LARGE SCALE ANALYSIS] AT SER-418</scope>
    <scope>IDENTIFICATION BY MASS SPECTROMETRY [LARGE SCALE ANALYSIS]</scope>
    <source>
        <tissue>Erythroleukemia</tissue>
    </source>
</reference>
<reference key="11">
    <citation type="journal article" date="2018" name="Front. Pharmacol.">
        <title>TAK-442, a Direct Factor Xa Inhibitor, Inhibits Monocyte Chemoattractant Protein 1 Production in Endothelial Cells via Involvement of Protease-Activated Receptor 1.</title>
        <authorList>
            <person name="Shinozawa E."/>
            <person name="Nakayama M."/>
            <person name="Imura Y."/>
        </authorList>
    </citation>
    <scope>FUNCTION</scope>
</reference>
<reference key="12">
    <citation type="journal article" date="2021" name="Cells">
        <title>Coagulation Factor Xa Induces Proinflammatory Responses in Cardiac Fibroblasts via Activation of Protease-Activated Receptor-1.</title>
        <authorList>
            <person name="D'Alessandro E."/>
            <person name="Scaf B."/>
            <person name="Munts C."/>
            <person name="van Hunnik A."/>
            <person name="Trevelyan C.J."/>
            <person name="Verheule S."/>
            <person name="Spronk H.M.H."/>
            <person name="Turner N.A."/>
            <person name="Ten Cate H."/>
            <person name="Schotten U."/>
            <person name="van Nieuwenhoven F.A."/>
        </authorList>
    </citation>
    <scope>FUNCTION</scope>
</reference>
<reference evidence="17" key="13">
    <citation type="journal article" date="2022" name="Immunohorizons">
        <title>Alboserpin, the Main Salivary Anticoagulant from the Disease Vector Aedes albopictus, Displays Anti-FXa-PAR Signaling In Vitro and In Vivo.</title>
        <authorList>
            <person name="Shrivastava G."/>
            <person name="Valenzuela-Leon P.C."/>
            <person name="Chagas A.C."/>
            <person name="Kern O."/>
            <person name="Botello K."/>
            <person name="Zhang Y."/>
            <person name="Martin-Martin I."/>
            <person name="Oliveira M.B."/>
            <person name="Tirloni L."/>
            <person name="Calvo E."/>
        </authorList>
    </citation>
    <scope>INDUCTION BY F10</scope>
</reference>
<reference key="14">
    <citation type="journal article" date="1999" name="Nat. Genet.">
        <title>Characterization of single-nucleotide polymorphisms in coding regions of human genes.</title>
        <authorList>
            <person name="Cargill M."/>
            <person name="Altshuler D."/>
            <person name="Ireland J."/>
            <person name="Sklar P."/>
            <person name="Ardlie K."/>
            <person name="Patil N."/>
            <person name="Shaw N."/>
            <person name="Lane C.R."/>
            <person name="Lim E.P."/>
            <person name="Kalyanaraman N."/>
            <person name="Nemesh J."/>
            <person name="Ziaugra L."/>
            <person name="Friedland L."/>
            <person name="Rolfe A."/>
            <person name="Warrington J."/>
            <person name="Lipshutz R."/>
            <person name="Daley G.Q."/>
            <person name="Lander E.S."/>
        </authorList>
    </citation>
    <scope>VARIANT GLY-166</scope>
</reference>
<reference key="15">
    <citation type="journal article" date="1999" name="Nat. Genet.">
        <authorList>
            <person name="Cargill M."/>
            <person name="Altshuler D."/>
            <person name="Ireland J."/>
            <person name="Sklar P."/>
            <person name="Ardlie K."/>
            <person name="Patil N."/>
            <person name="Shaw N."/>
            <person name="Lane C.R."/>
            <person name="Lim E.P."/>
            <person name="Kalyanaraman N."/>
            <person name="Nemesh J."/>
            <person name="Ziaugra L."/>
            <person name="Friedland L."/>
            <person name="Rolfe A."/>
            <person name="Warrington J."/>
            <person name="Lipshutz R."/>
            <person name="Daley G.Q."/>
            <person name="Lander E.S."/>
        </authorList>
    </citation>
    <scope>ERRATUM OF PUBMED:10391209</scope>
</reference>
<reference key="16">
    <citation type="journal article" date="1994" name="Biochemistry">
        <title>Crystallographic structures of thrombin complexed with thrombin receptor peptides: existence of expected and novel binding modes.</title>
        <authorList>
            <person name="Mathews I.I."/>
            <person name="Padmanabhan K.P."/>
            <person name="Ganesh V."/>
            <person name="Tulinsky A."/>
            <person name="Ishii M."/>
            <person name="Chen J."/>
            <person name="Turck C.W."/>
            <person name="Coughlin S.R."/>
            <person name="Fenton J.W. II"/>
        </authorList>
    </citation>
    <scope>X-RAY CRYSTALLOGRAPHY (2.4 ANGSTROMS) OF 38-64 IN COMPLEX WITH THROMBIN</scope>
    <scope>FUNCTION</scope>
</reference>
<gene>
    <name evidence="18" type="primary">F2R</name>
    <name type="synonym">CF2R</name>
    <name type="synonym">PAR1</name>
    <name type="synonym">TR</name>
</gene>
<feature type="signal peptide" evidence="9">
    <location>
        <begin position="1"/>
        <end position="21"/>
    </location>
</feature>
<feature type="propeptide" id="PRO_0000012740">
    <location>
        <begin position="22"/>
        <end position="41"/>
    </location>
</feature>
<feature type="chain" id="PRO_0000012741" description="Proteinase-activated receptor 1">
    <location>
        <begin position="42"/>
        <end position="425"/>
    </location>
</feature>
<feature type="topological domain" description="Extracellular" evidence="3">
    <location>
        <begin position="42"/>
        <end position="102"/>
    </location>
</feature>
<feature type="transmembrane region" description="Helical; Name=1" evidence="3">
    <location>
        <begin position="103"/>
        <end position="128"/>
    </location>
</feature>
<feature type="topological domain" description="Cytoplasmic" evidence="3">
    <location>
        <begin position="129"/>
        <end position="137"/>
    </location>
</feature>
<feature type="transmembrane region" description="Helical; Name=2" evidence="3">
    <location>
        <begin position="138"/>
        <end position="157"/>
    </location>
</feature>
<feature type="topological domain" description="Extracellular" evidence="3">
    <location>
        <begin position="158"/>
        <end position="176"/>
    </location>
</feature>
<feature type="transmembrane region" description="Helical; Name=3" evidence="3">
    <location>
        <begin position="177"/>
        <end position="198"/>
    </location>
</feature>
<feature type="topological domain" description="Cytoplasmic" evidence="3">
    <location>
        <begin position="199"/>
        <end position="218"/>
    </location>
</feature>
<feature type="transmembrane region" description="Helical; Name=4" evidence="3">
    <location>
        <begin position="219"/>
        <end position="239"/>
    </location>
</feature>
<feature type="topological domain" description="Extracellular" evidence="3">
    <location>
        <begin position="240"/>
        <end position="268"/>
    </location>
</feature>
<feature type="transmembrane region" description="Helical; Name=5" evidence="3">
    <location>
        <begin position="269"/>
        <end position="288"/>
    </location>
</feature>
<feature type="topological domain" description="Cytoplasmic" evidence="3">
    <location>
        <begin position="289"/>
        <end position="311"/>
    </location>
</feature>
<feature type="transmembrane region" description="Helical; Name=6" evidence="3">
    <location>
        <begin position="312"/>
        <end position="334"/>
    </location>
</feature>
<feature type="topological domain" description="Extracellular" evidence="3">
    <location>
        <begin position="335"/>
        <end position="350"/>
    </location>
</feature>
<feature type="transmembrane region" description="Helical; Name=7" evidence="3">
    <location>
        <begin position="351"/>
        <end position="374"/>
    </location>
</feature>
<feature type="topological domain" description="Cytoplasmic" evidence="3">
    <location>
        <begin position="375"/>
        <end position="425"/>
    </location>
</feature>
<feature type="site" description="Cleavage; by thrombin and CTSG" evidence="8 13">
    <location>
        <begin position="41"/>
        <end position="42"/>
    </location>
</feature>
<feature type="site" description="Cleavage; by CTSG" evidence="13">
    <location>
        <begin position="55"/>
        <end position="56"/>
    </location>
</feature>
<feature type="modified residue" description="Phosphoserine" evidence="19">
    <location>
        <position position="418"/>
    </location>
</feature>
<feature type="glycosylation site" description="N-linked (GlcNAc...) asparagine" evidence="3">
    <location>
        <position position="35"/>
    </location>
</feature>
<feature type="glycosylation site" description="N-linked (GlcNAc...) asparagine" evidence="3">
    <location>
        <position position="62"/>
    </location>
</feature>
<feature type="glycosylation site" description="N-linked (GlcNAc...) asparagine" evidence="3">
    <location>
        <position position="75"/>
    </location>
</feature>
<feature type="glycosylation site" description="N-linked (GlcNAc...) asparagine" evidence="3">
    <location>
        <position position="250"/>
    </location>
</feature>
<feature type="glycosylation site" description="N-linked (GlcNAc...) asparagine" evidence="3">
    <location>
        <position position="259"/>
    </location>
</feature>
<feature type="disulfide bond" evidence="4">
    <location>
        <begin position="175"/>
        <end position="254"/>
    </location>
</feature>
<feature type="sequence variant" id="VAR_014167" description="In dbSNP:rs5893." evidence="6">
    <original>S</original>
    <variation>G</variation>
    <location>
        <position position="166"/>
    </location>
</feature>
<feature type="sequence variant" id="VAR_049432" description="In dbSNP:rs2230849.">
    <original>Y</original>
    <variation>N</variation>
    <location>
        <position position="187"/>
    </location>
</feature>
<feature type="sequence variant" id="VAR_049433" description="In dbSNP:rs2227832.">
    <original>V</original>
    <variation>L</variation>
    <location>
        <position position="257"/>
    </location>
</feature>
<feature type="sequence variant" id="VAR_060680" description="In dbSNP:rs1055103.">
    <original>A</original>
    <variation>P</variation>
    <location>
        <position position="268"/>
    </location>
</feature>
<feature type="sequence variant" id="VAR_060681" description="In dbSNP:rs17849599." evidence="7 16">
    <original>A</original>
    <variation>V</variation>
    <location>
        <position position="335"/>
    </location>
</feature>
<feature type="sequence variant" id="VAR_049434" description="In dbSNP:rs2227799.">
    <original>S</original>
    <variation>Y</variation>
    <location>
        <position position="412"/>
    </location>
</feature>
<feature type="mutagenesis site" description="Abolishes cleavage by CTSG but not by thrombin." evidence="13">
    <original>FW</original>
    <variation>AA</variation>
    <location>
        <begin position="55"/>
        <end position="56"/>
    </location>
</feature>
<feature type="sequence conflict" description="In Ref. 1; AAA36743." evidence="17" ref="1">
    <original>L</original>
    <variation>V</variation>
    <location>
        <position position="238"/>
    </location>
</feature>
<feature type="sequence conflict" description="In Ref. 1; AAA36743." evidence="17" ref="1">
    <original>C</original>
    <variation>S</variation>
    <location>
        <position position="364"/>
    </location>
</feature>
<feature type="strand" evidence="20">
    <location>
        <begin position="39"/>
        <end position="41"/>
    </location>
</feature>
<feature type="strand" evidence="22">
    <location>
        <begin position="43"/>
        <end position="46"/>
    </location>
</feature>
<feature type="turn" evidence="20">
    <location>
        <begin position="47"/>
        <end position="50"/>
    </location>
</feature>
<feature type="helix" evidence="21">
    <location>
        <begin position="92"/>
        <end position="96"/>
    </location>
</feature>
<feature type="helix" evidence="21">
    <location>
        <begin position="99"/>
        <end position="102"/>
    </location>
</feature>
<feature type="helix" evidence="21">
    <location>
        <begin position="104"/>
        <end position="130"/>
    </location>
</feature>
<feature type="helix" evidence="21">
    <location>
        <begin position="131"/>
        <end position="133"/>
    </location>
</feature>
<feature type="helix" evidence="21">
    <location>
        <begin position="136"/>
        <end position="152"/>
    </location>
</feature>
<feature type="helix" evidence="21">
    <location>
        <begin position="155"/>
        <end position="163"/>
    </location>
</feature>
<feature type="helix" evidence="21">
    <location>
        <begin position="172"/>
        <end position="205"/>
    </location>
</feature>
<feature type="helix" evidence="22">
    <location>
        <begin position="207"/>
        <end position="213"/>
    </location>
</feature>
<feature type="helix" evidence="21">
    <location>
        <begin position="216"/>
        <end position="238"/>
    </location>
</feature>
<feature type="strand" evidence="21">
    <location>
        <begin position="243"/>
        <end position="246"/>
    </location>
</feature>
<feature type="turn" evidence="21">
    <location>
        <begin position="247"/>
        <end position="250"/>
    </location>
</feature>
<feature type="strand" evidence="21">
    <location>
        <begin position="251"/>
        <end position="257"/>
    </location>
</feature>
<feature type="helix" evidence="22">
    <location>
        <begin position="260"/>
        <end position="264"/>
    </location>
</feature>
<feature type="helix" evidence="21">
    <location>
        <begin position="265"/>
        <end position="296"/>
    </location>
</feature>
<feature type="helix" evidence="21">
    <location>
        <begin position="305"/>
        <end position="324"/>
    </location>
</feature>
<feature type="helix" evidence="21">
    <location>
        <begin position="327"/>
        <end position="338"/>
    </location>
</feature>
<feature type="turn" evidence="22">
    <location>
        <begin position="339"/>
        <end position="341"/>
    </location>
</feature>
<feature type="helix" evidence="21">
    <location>
        <begin position="347"/>
        <end position="360"/>
    </location>
</feature>
<feature type="helix" evidence="21">
    <location>
        <begin position="363"/>
        <end position="373"/>
    </location>
</feature>
<feature type="helix" evidence="22">
    <location>
        <begin position="376"/>
        <end position="379"/>
    </location>
</feature>
<proteinExistence type="evidence at protein level"/>
<comment type="function">
    <text evidence="1 2 5 8 10 11 14">High affinity receptor that binds the activated thrombin, leading to calcium release from intracellular stores (PubMed:1672265, PubMed:8136362). The thrombin-activated receptor signaling pathway is mediated through PTX-insensitive G proteins, activation of phospholipase C resulting in the production of 1D-myo-inositol 1,4,5-trisphosphate (InsP3) which binds to InsP3 receptors causing calcium release from the stores (By similarity). In astrocytes, the calcium released into the cytosol allows the Ca(2+)-dependent release of L-glutamate into the synaptic cleft through BEST1, that targets the neuronal postsynaptic GRIN2A/NMDAR receptor resulting in the synaptic plasticity regulation (By similarity). May play a role in platelets activation and in vascular development (PubMed:10079109). Mediates up-regulation of pro-inflammatory cytokines, such as MCP-1/CCL2 and IL6, triggered by coagulation factor Xa (F10) in cardiac fibroblasts and umbilical vein endothelial cells (PubMed:30568593, PubMed:34831181).</text>
</comment>
<comment type="interaction">
    <interactant intactId="EBI-2803960">
        <id>P25116</id>
    </interactant>
    <interactant intactId="EBI-603614">
        <id>Q03135</id>
        <label>CAV1</label>
    </interactant>
    <organismsDiffer>false</organismsDiffer>
    <experiments>3</experiments>
</comment>
<comment type="interaction">
    <interactant intactId="EBI-2803960">
        <id>P25116</id>
    </interactant>
    <interactant intactId="EBI-719705">
        <id>Q9UNN8</id>
        <label>PROCR</label>
    </interactant>
    <organismsDiffer>false</organismsDiffer>
    <experiments>5</experiments>
</comment>
<comment type="subcellular location">
    <subcellularLocation>
        <location evidence="1">Cell membrane</location>
        <topology evidence="1">Multi-pass membrane protein</topology>
    </subcellularLocation>
</comment>
<comment type="tissue specificity">
    <text>Platelets and vascular endothelial cells.</text>
</comment>
<comment type="induction">
    <text evidence="12">Up-regulated by coagulation factor X (F10) (activated).</text>
</comment>
<comment type="domain">
    <text>The cleaved signal peptide may not be degraded and may function as an intracellular angiogenesis inhibitor peptide known as parstatin.</text>
</comment>
<comment type="PTM">
    <text evidence="8 13">Proteolytic cleavage by thrombin generates a new N-terminus that functions as a tethered ligand (PubMed:1672265, PubMed:7744748). Also proteolytically cleaved by cathepsin CTSG (PubMed:7744748). Cleavage at 41-Arg-|-Ser-42 by CTSG results in receptor activation while cleavage at 55-Phe-|-Trp-56 results in inhibition of receptor activation (PubMed:7744748).</text>
</comment>
<comment type="PTM">
    <text evidence="15">Phosphorylated in the C-terminal tail; probably mediating desensitization prior to the uncoupling and internalization of the receptor.</text>
</comment>
<comment type="similarity">
    <text evidence="4">Belongs to the G-protein coupled receptor 1 family.</text>
</comment>